<feature type="chain" id="PRO_0000266208" description="CTP synthase">
    <location>
        <begin position="1"/>
        <end position="543"/>
    </location>
</feature>
<feature type="domain" description="Glutamine amidotransferase type-1" evidence="1">
    <location>
        <begin position="290"/>
        <end position="541"/>
    </location>
</feature>
<feature type="region of interest" description="Amidoligase domain" evidence="1">
    <location>
        <begin position="1"/>
        <end position="265"/>
    </location>
</feature>
<feature type="active site" description="Nucleophile; for glutamine hydrolysis" evidence="1">
    <location>
        <position position="378"/>
    </location>
</feature>
<feature type="active site" evidence="1">
    <location>
        <position position="514"/>
    </location>
</feature>
<feature type="active site" evidence="1">
    <location>
        <position position="516"/>
    </location>
</feature>
<feature type="binding site" evidence="1">
    <location>
        <position position="13"/>
    </location>
    <ligand>
        <name>CTP</name>
        <dbReference type="ChEBI" id="CHEBI:37563"/>
        <note>allosteric inhibitor</note>
    </ligand>
</feature>
<feature type="binding site" evidence="1">
    <location>
        <position position="13"/>
    </location>
    <ligand>
        <name>UTP</name>
        <dbReference type="ChEBI" id="CHEBI:46398"/>
    </ligand>
</feature>
<feature type="binding site" evidence="1">
    <location>
        <begin position="14"/>
        <end position="19"/>
    </location>
    <ligand>
        <name>ATP</name>
        <dbReference type="ChEBI" id="CHEBI:30616"/>
    </ligand>
</feature>
<feature type="binding site" evidence="1">
    <location>
        <position position="71"/>
    </location>
    <ligand>
        <name>ATP</name>
        <dbReference type="ChEBI" id="CHEBI:30616"/>
    </ligand>
</feature>
<feature type="binding site" evidence="1">
    <location>
        <position position="71"/>
    </location>
    <ligand>
        <name>Mg(2+)</name>
        <dbReference type="ChEBI" id="CHEBI:18420"/>
    </ligand>
</feature>
<feature type="binding site" evidence="1">
    <location>
        <position position="139"/>
    </location>
    <ligand>
        <name>Mg(2+)</name>
        <dbReference type="ChEBI" id="CHEBI:18420"/>
    </ligand>
</feature>
<feature type="binding site" evidence="1">
    <location>
        <begin position="146"/>
        <end position="148"/>
    </location>
    <ligand>
        <name>CTP</name>
        <dbReference type="ChEBI" id="CHEBI:37563"/>
        <note>allosteric inhibitor</note>
    </ligand>
</feature>
<feature type="binding site" evidence="1">
    <location>
        <begin position="186"/>
        <end position="191"/>
    </location>
    <ligand>
        <name>CTP</name>
        <dbReference type="ChEBI" id="CHEBI:37563"/>
        <note>allosteric inhibitor</note>
    </ligand>
</feature>
<feature type="binding site" evidence="1">
    <location>
        <begin position="186"/>
        <end position="191"/>
    </location>
    <ligand>
        <name>UTP</name>
        <dbReference type="ChEBI" id="CHEBI:46398"/>
    </ligand>
</feature>
<feature type="binding site" evidence="1">
    <location>
        <position position="222"/>
    </location>
    <ligand>
        <name>CTP</name>
        <dbReference type="ChEBI" id="CHEBI:37563"/>
        <note>allosteric inhibitor</note>
    </ligand>
</feature>
<feature type="binding site" evidence="1">
    <location>
        <position position="222"/>
    </location>
    <ligand>
        <name>UTP</name>
        <dbReference type="ChEBI" id="CHEBI:46398"/>
    </ligand>
</feature>
<feature type="binding site" evidence="1">
    <location>
        <position position="351"/>
    </location>
    <ligand>
        <name>L-glutamine</name>
        <dbReference type="ChEBI" id="CHEBI:58359"/>
    </ligand>
</feature>
<feature type="binding site" evidence="1">
    <location>
        <begin position="379"/>
        <end position="382"/>
    </location>
    <ligand>
        <name>L-glutamine</name>
        <dbReference type="ChEBI" id="CHEBI:58359"/>
    </ligand>
</feature>
<feature type="binding site" evidence="1">
    <location>
        <position position="402"/>
    </location>
    <ligand>
        <name>L-glutamine</name>
        <dbReference type="ChEBI" id="CHEBI:58359"/>
    </ligand>
</feature>
<feature type="binding site" evidence="1">
    <location>
        <position position="469"/>
    </location>
    <ligand>
        <name>L-glutamine</name>
        <dbReference type="ChEBI" id="CHEBI:58359"/>
    </ligand>
</feature>
<protein>
    <recommendedName>
        <fullName evidence="1">CTP synthase</fullName>
        <ecNumber evidence="1">6.3.4.2</ecNumber>
    </recommendedName>
    <alternativeName>
        <fullName evidence="1">Cytidine 5'-triphosphate synthase</fullName>
    </alternativeName>
    <alternativeName>
        <fullName evidence="1">Cytidine triphosphate synthetase</fullName>
        <shortName evidence="1">CTP synthetase</shortName>
        <shortName evidence="1">CTPS</shortName>
    </alternativeName>
    <alternativeName>
        <fullName evidence="1">UTP--ammonia ligase</fullName>
    </alternativeName>
</protein>
<proteinExistence type="inferred from homology"/>
<sequence length="543" mass="60687">MTRFIFVTGGVVSSLGKGIASASLAAVLEARGLKVTILKLDPYINVDPGTMSPFQHGEVFVTDDGAETDLDLGHYERFIRTRMTKRNNFTTGRVYETVLRKERRGDYLGGTVQVIPHITDEIKRRILAGGDGVDIALVEIGGTVGDIESQPFLEAVRQLKVELGNQRALLMHLTLVPYIATAGETKTKPTQHSVKELRSIGLQPDILLCRSEKEIDVDSRRKISLFTNVEERAVVPLPDAKSIYLIPRLLQSYNLDQIVLDKFGLEAAETDLAEWDEVVRREQNPEHAVTIAMVGKYMDLLDAYKSLNEALLHAGLHTLTKVKINYINAEDVETQGVSILEDADAILVPGGFGERGLEGKLMAVRYARENKVPYLGICLGMQTAVIEFARNVLKLDGANSTEFDRKSPFPVIGLITEWINEEGKVETRDESSDLGGTMRLGAQECHLEENSRIREIYGKANIIERHRHRFEVNNRFLDQLRQGGLRIGGWSSDDTLVEVVEVPDHPWFVACQFHPEFTSTPRDGHPLFTSYIQAAVEQNERAK</sequence>
<keyword id="KW-0067">ATP-binding</keyword>
<keyword id="KW-0315">Glutamine amidotransferase</keyword>
<keyword id="KW-0436">Ligase</keyword>
<keyword id="KW-0460">Magnesium</keyword>
<keyword id="KW-0479">Metal-binding</keyword>
<keyword id="KW-0547">Nucleotide-binding</keyword>
<keyword id="KW-0665">Pyrimidine biosynthesis</keyword>
<keyword id="KW-1185">Reference proteome</keyword>
<accession>Q21LC4</accession>
<evidence type="ECO:0000255" key="1">
    <source>
        <dbReference type="HAMAP-Rule" id="MF_01227"/>
    </source>
</evidence>
<organism>
    <name type="scientific">Saccharophagus degradans (strain 2-40 / ATCC 43961 / DSM 17024)</name>
    <dbReference type="NCBI Taxonomy" id="203122"/>
    <lineage>
        <taxon>Bacteria</taxon>
        <taxon>Pseudomonadati</taxon>
        <taxon>Pseudomonadota</taxon>
        <taxon>Gammaproteobacteria</taxon>
        <taxon>Cellvibrionales</taxon>
        <taxon>Cellvibrionaceae</taxon>
        <taxon>Saccharophagus</taxon>
    </lineage>
</organism>
<comment type="function">
    <text evidence="1">Catalyzes the ATP-dependent amination of UTP to CTP with either L-glutamine or ammonia as the source of nitrogen. Regulates intracellular CTP levels through interactions with the four ribonucleotide triphosphates.</text>
</comment>
<comment type="catalytic activity">
    <reaction evidence="1">
        <text>UTP + L-glutamine + ATP + H2O = CTP + L-glutamate + ADP + phosphate + 2 H(+)</text>
        <dbReference type="Rhea" id="RHEA:26426"/>
        <dbReference type="ChEBI" id="CHEBI:15377"/>
        <dbReference type="ChEBI" id="CHEBI:15378"/>
        <dbReference type="ChEBI" id="CHEBI:29985"/>
        <dbReference type="ChEBI" id="CHEBI:30616"/>
        <dbReference type="ChEBI" id="CHEBI:37563"/>
        <dbReference type="ChEBI" id="CHEBI:43474"/>
        <dbReference type="ChEBI" id="CHEBI:46398"/>
        <dbReference type="ChEBI" id="CHEBI:58359"/>
        <dbReference type="ChEBI" id="CHEBI:456216"/>
        <dbReference type="EC" id="6.3.4.2"/>
    </reaction>
</comment>
<comment type="catalytic activity">
    <reaction evidence="1">
        <text>L-glutamine + H2O = L-glutamate + NH4(+)</text>
        <dbReference type="Rhea" id="RHEA:15889"/>
        <dbReference type="ChEBI" id="CHEBI:15377"/>
        <dbReference type="ChEBI" id="CHEBI:28938"/>
        <dbReference type="ChEBI" id="CHEBI:29985"/>
        <dbReference type="ChEBI" id="CHEBI:58359"/>
    </reaction>
</comment>
<comment type="catalytic activity">
    <reaction evidence="1">
        <text>UTP + NH4(+) + ATP = CTP + ADP + phosphate + 2 H(+)</text>
        <dbReference type="Rhea" id="RHEA:16597"/>
        <dbReference type="ChEBI" id="CHEBI:15378"/>
        <dbReference type="ChEBI" id="CHEBI:28938"/>
        <dbReference type="ChEBI" id="CHEBI:30616"/>
        <dbReference type="ChEBI" id="CHEBI:37563"/>
        <dbReference type="ChEBI" id="CHEBI:43474"/>
        <dbReference type="ChEBI" id="CHEBI:46398"/>
        <dbReference type="ChEBI" id="CHEBI:456216"/>
    </reaction>
</comment>
<comment type="activity regulation">
    <text evidence="1">Allosterically activated by GTP, when glutamine is the substrate; GTP has no effect on the reaction when ammonia is the substrate. The allosteric effector GTP functions by stabilizing the protein conformation that binds the tetrahedral intermediate(s) formed during glutamine hydrolysis. Inhibited by the product CTP, via allosteric rather than competitive inhibition.</text>
</comment>
<comment type="pathway">
    <text evidence="1">Pyrimidine metabolism; CTP biosynthesis via de novo pathway; CTP from UDP: step 2/2.</text>
</comment>
<comment type="subunit">
    <text evidence="1">Homotetramer.</text>
</comment>
<comment type="miscellaneous">
    <text evidence="1">CTPSs have evolved a hybrid strategy for distinguishing between UTP and CTP. The overlapping regions of the product feedback inhibitory and substrate sites recognize a common feature in both compounds, the triphosphate moiety. To differentiate isosteric substrate and product pyrimidine rings, an additional pocket far from the expected kinase/ligase catalytic site, specifically recognizes the cytosine and ribose portions of the product inhibitor.</text>
</comment>
<comment type="similarity">
    <text evidence="1">Belongs to the CTP synthase family.</text>
</comment>
<reference key="1">
    <citation type="journal article" date="2008" name="PLoS Genet.">
        <title>Complete genome sequence of the complex carbohydrate-degrading marine bacterium, Saccharophagus degradans strain 2-40 T.</title>
        <authorList>
            <person name="Weiner R.M."/>
            <person name="Taylor L.E. II"/>
            <person name="Henrissat B."/>
            <person name="Hauser L."/>
            <person name="Land M."/>
            <person name="Coutinho P.M."/>
            <person name="Rancurel C."/>
            <person name="Saunders E.H."/>
            <person name="Longmire A.G."/>
            <person name="Zhang H."/>
            <person name="Bayer E.A."/>
            <person name="Gilbert H.J."/>
            <person name="Larimer F."/>
            <person name="Zhulin I.B."/>
            <person name="Ekborg N.A."/>
            <person name="Lamed R."/>
            <person name="Richardson P.M."/>
            <person name="Borovok I."/>
            <person name="Hutcheson S."/>
        </authorList>
    </citation>
    <scope>NUCLEOTIDE SEQUENCE [LARGE SCALE GENOMIC DNA]</scope>
    <source>
        <strain>2-40 / ATCC 43961 / DSM 17024</strain>
    </source>
</reference>
<dbReference type="EC" id="6.3.4.2" evidence="1"/>
<dbReference type="EMBL" id="CP000282">
    <property type="protein sequence ID" value="ABD80505.1"/>
    <property type="molecule type" value="Genomic_DNA"/>
</dbReference>
<dbReference type="RefSeq" id="WP_011467725.1">
    <property type="nucleotide sequence ID" value="NC_007912.1"/>
</dbReference>
<dbReference type="SMR" id="Q21LC4"/>
<dbReference type="STRING" id="203122.Sde_1243"/>
<dbReference type="MEROPS" id="C26.964"/>
<dbReference type="GeneID" id="98612920"/>
<dbReference type="KEGG" id="sde:Sde_1243"/>
<dbReference type="eggNOG" id="COG0504">
    <property type="taxonomic scope" value="Bacteria"/>
</dbReference>
<dbReference type="HOGENOM" id="CLU_011675_5_0_6"/>
<dbReference type="OrthoDB" id="9801107at2"/>
<dbReference type="UniPathway" id="UPA00159">
    <property type="reaction ID" value="UER00277"/>
</dbReference>
<dbReference type="Proteomes" id="UP000001947">
    <property type="component" value="Chromosome"/>
</dbReference>
<dbReference type="GO" id="GO:0005829">
    <property type="term" value="C:cytosol"/>
    <property type="evidence" value="ECO:0007669"/>
    <property type="project" value="TreeGrafter"/>
</dbReference>
<dbReference type="GO" id="GO:0005524">
    <property type="term" value="F:ATP binding"/>
    <property type="evidence" value="ECO:0007669"/>
    <property type="project" value="UniProtKB-KW"/>
</dbReference>
<dbReference type="GO" id="GO:0003883">
    <property type="term" value="F:CTP synthase activity"/>
    <property type="evidence" value="ECO:0007669"/>
    <property type="project" value="UniProtKB-UniRule"/>
</dbReference>
<dbReference type="GO" id="GO:0004359">
    <property type="term" value="F:glutaminase activity"/>
    <property type="evidence" value="ECO:0007669"/>
    <property type="project" value="RHEA"/>
</dbReference>
<dbReference type="GO" id="GO:0042802">
    <property type="term" value="F:identical protein binding"/>
    <property type="evidence" value="ECO:0007669"/>
    <property type="project" value="TreeGrafter"/>
</dbReference>
<dbReference type="GO" id="GO:0046872">
    <property type="term" value="F:metal ion binding"/>
    <property type="evidence" value="ECO:0007669"/>
    <property type="project" value="UniProtKB-KW"/>
</dbReference>
<dbReference type="GO" id="GO:0044210">
    <property type="term" value="P:'de novo' CTP biosynthetic process"/>
    <property type="evidence" value="ECO:0007669"/>
    <property type="project" value="UniProtKB-UniRule"/>
</dbReference>
<dbReference type="GO" id="GO:0019856">
    <property type="term" value="P:pyrimidine nucleobase biosynthetic process"/>
    <property type="evidence" value="ECO:0007669"/>
    <property type="project" value="TreeGrafter"/>
</dbReference>
<dbReference type="CDD" id="cd03113">
    <property type="entry name" value="CTPS_N"/>
    <property type="match status" value="1"/>
</dbReference>
<dbReference type="CDD" id="cd01746">
    <property type="entry name" value="GATase1_CTP_Synthase"/>
    <property type="match status" value="1"/>
</dbReference>
<dbReference type="FunFam" id="3.40.50.300:FF:000009">
    <property type="entry name" value="CTP synthase"/>
    <property type="match status" value="1"/>
</dbReference>
<dbReference type="FunFam" id="3.40.50.880:FF:000002">
    <property type="entry name" value="CTP synthase"/>
    <property type="match status" value="1"/>
</dbReference>
<dbReference type="Gene3D" id="3.40.50.880">
    <property type="match status" value="1"/>
</dbReference>
<dbReference type="Gene3D" id="3.40.50.300">
    <property type="entry name" value="P-loop containing nucleotide triphosphate hydrolases"/>
    <property type="match status" value="1"/>
</dbReference>
<dbReference type="HAMAP" id="MF_01227">
    <property type="entry name" value="PyrG"/>
    <property type="match status" value="1"/>
</dbReference>
<dbReference type="InterPro" id="IPR029062">
    <property type="entry name" value="Class_I_gatase-like"/>
</dbReference>
<dbReference type="InterPro" id="IPR004468">
    <property type="entry name" value="CTP_synthase"/>
</dbReference>
<dbReference type="InterPro" id="IPR017456">
    <property type="entry name" value="CTP_synthase_N"/>
</dbReference>
<dbReference type="InterPro" id="IPR017926">
    <property type="entry name" value="GATASE"/>
</dbReference>
<dbReference type="InterPro" id="IPR033828">
    <property type="entry name" value="GATase1_CTP_Synthase"/>
</dbReference>
<dbReference type="InterPro" id="IPR027417">
    <property type="entry name" value="P-loop_NTPase"/>
</dbReference>
<dbReference type="NCBIfam" id="NF003792">
    <property type="entry name" value="PRK05380.1"/>
    <property type="match status" value="1"/>
</dbReference>
<dbReference type="NCBIfam" id="TIGR00337">
    <property type="entry name" value="PyrG"/>
    <property type="match status" value="1"/>
</dbReference>
<dbReference type="PANTHER" id="PTHR11550">
    <property type="entry name" value="CTP SYNTHASE"/>
    <property type="match status" value="1"/>
</dbReference>
<dbReference type="PANTHER" id="PTHR11550:SF0">
    <property type="entry name" value="CTP SYNTHASE-RELATED"/>
    <property type="match status" value="1"/>
</dbReference>
<dbReference type="Pfam" id="PF06418">
    <property type="entry name" value="CTP_synth_N"/>
    <property type="match status" value="1"/>
</dbReference>
<dbReference type="Pfam" id="PF00117">
    <property type="entry name" value="GATase"/>
    <property type="match status" value="1"/>
</dbReference>
<dbReference type="SUPFAM" id="SSF52317">
    <property type="entry name" value="Class I glutamine amidotransferase-like"/>
    <property type="match status" value="1"/>
</dbReference>
<dbReference type="SUPFAM" id="SSF52540">
    <property type="entry name" value="P-loop containing nucleoside triphosphate hydrolases"/>
    <property type="match status" value="1"/>
</dbReference>
<dbReference type="PROSITE" id="PS51273">
    <property type="entry name" value="GATASE_TYPE_1"/>
    <property type="match status" value="1"/>
</dbReference>
<name>PYRG_SACD2</name>
<gene>
    <name evidence="1" type="primary">pyrG</name>
    <name type="ordered locus">Sde_1243</name>
</gene>